<accession>A0T0Q9</accession>
<organism>
    <name type="scientific">Thalassiosira pseudonana</name>
    <name type="common">Marine diatom</name>
    <name type="synonym">Cyclotella nana</name>
    <dbReference type="NCBI Taxonomy" id="35128"/>
    <lineage>
        <taxon>Eukaryota</taxon>
        <taxon>Sar</taxon>
        <taxon>Stramenopiles</taxon>
        <taxon>Ochrophyta</taxon>
        <taxon>Bacillariophyta</taxon>
        <taxon>Coscinodiscophyceae</taxon>
        <taxon>Thalassiosirophycidae</taxon>
        <taxon>Thalassiosirales</taxon>
        <taxon>Thalassiosiraceae</taxon>
        <taxon>Thalassiosira</taxon>
    </lineage>
</organism>
<dbReference type="EC" id="2.7.7.6" evidence="1"/>
<dbReference type="EMBL" id="EF067921">
    <property type="protein sequence ID" value="ABK20744.1"/>
    <property type="molecule type" value="Genomic_DNA"/>
</dbReference>
<dbReference type="RefSeq" id="YP_874521.1">
    <property type="nucleotide sequence ID" value="NC_008589.1"/>
</dbReference>
<dbReference type="SMR" id="A0T0Q9"/>
<dbReference type="FunCoup" id="A0T0Q9">
    <property type="interactions" value="4"/>
</dbReference>
<dbReference type="STRING" id="35128.A0T0Q9"/>
<dbReference type="PaxDb" id="35128-Thapsdraft2050"/>
<dbReference type="GeneID" id="4524727"/>
<dbReference type="eggNOG" id="ENOG502RUNH">
    <property type="taxonomic scope" value="Eukaryota"/>
</dbReference>
<dbReference type="InParanoid" id="A0T0Q9"/>
<dbReference type="OMA" id="IEGKSDW"/>
<dbReference type="GO" id="GO:0009507">
    <property type="term" value="C:chloroplast"/>
    <property type="evidence" value="ECO:0007669"/>
    <property type="project" value="UniProtKB-SubCell"/>
</dbReference>
<dbReference type="GO" id="GO:0000428">
    <property type="term" value="C:DNA-directed RNA polymerase complex"/>
    <property type="evidence" value="ECO:0007669"/>
    <property type="project" value="UniProtKB-KW"/>
</dbReference>
<dbReference type="GO" id="GO:0005739">
    <property type="term" value="C:mitochondrion"/>
    <property type="evidence" value="ECO:0007669"/>
    <property type="project" value="GOC"/>
</dbReference>
<dbReference type="GO" id="GO:0003677">
    <property type="term" value="F:DNA binding"/>
    <property type="evidence" value="ECO:0007669"/>
    <property type="project" value="UniProtKB-UniRule"/>
</dbReference>
<dbReference type="GO" id="GO:0003899">
    <property type="term" value="F:DNA-directed RNA polymerase activity"/>
    <property type="evidence" value="ECO:0007669"/>
    <property type="project" value="UniProtKB-UniRule"/>
</dbReference>
<dbReference type="GO" id="GO:0008270">
    <property type="term" value="F:zinc ion binding"/>
    <property type="evidence" value="ECO:0007669"/>
    <property type="project" value="UniProtKB-UniRule"/>
</dbReference>
<dbReference type="GO" id="GO:0006351">
    <property type="term" value="P:DNA-templated transcription"/>
    <property type="evidence" value="ECO:0007669"/>
    <property type="project" value="UniProtKB-UniRule"/>
</dbReference>
<dbReference type="CDD" id="cd02655">
    <property type="entry name" value="RNAP_beta'_C"/>
    <property type="match status" value="1"/>
</dbReference>
<dbReference type="Gene3D" id="1.10.132.30">
    <property type="match status" value="1"/>
</dbReference>
<dbReference type="Gene3D" id="1.10.150.390">
    <property type="match status" value="1"/>
</dbReference>
<dbReference type="Gene3D" id="1.10.1790.20">
    <property type="match status" value="1"/>
</dbReference>
<dbReference type="Gene3D" id="1.10.274.100">
    <property type="entry name" value="RNA polymerase Rpb1, domain 3"/>
    <property type="match status" value="1"/>
</dbReference>
<dbReference type="HAMAP" id="MF_01324">
    <property type="entry name" value="RNApol_bact_RpoC2"/>
    <property type="match status" value="1"/>
</dbReference>
<dbReference type="InterPro" id="IPR012756">
    <property type="entry name" value="DNA-dir_RpoC2_beta_pp"/>
</dbReference>
<dbReference type="InterPro" id="IPR045867">
    <property type="entry name" value="DNA-dir_RpoC_beta_prime"/>
</dbReference>
<dbReference type="InterPro" id="IPR007066">
    <property type="entry name" value="RNA_pol_Rpb1_3"/>
</dbReference>
<dbReference type="InterPro" id="IPR042102">
    <property type="entry name" value="RNA_pol_Rpb1_3_sf"/>
</dbReference>
<dbReference type="InterPro" id="IPR007083">
    <property type="entry name" value="RNA_pol_Rpb1_4"/>
</dbReference>
<dbReference type="InterPro" id="IPR007081">
    <property type="entry name" value="RNA_pol_Rpb1_5"/>
</dbReference>
<dbReference type="InterPro" id="IPR038120">
    <property type="entry name" value="Rpb1_funnel_sf"/>
</dbReference>
<dbReference type="NCBIfam" id="TIGR02388">
    <property type="entry name" value="rpoC2_cyan"/>
    <property type="match status" value="1"/>
</dbReference>
<dbReference type="PANTHER" id="PTHR19376">
    <property type="entry name" value="DNA-DIRECTED RNA POLYMERASE"/>
    <property type="match status" value="1"/>
</dbReference>
<dbReference type="PANTHER" id="PTHR19376:SF63">
    <property type="entry name" value="DNA-DIRECTED RNA POLYMERASE SUBUNIT BETA"/>
    <property type="match status" value="1"/>
</dbReference>
<dbReference type="Pfam" id="PF04983">
    <property type="entry name" value="RNA_pol_Rpb1_3"/>
    <property type="match status" value="1"/>
</dbReference>
<dbReference type="Pfam" id="PF05000">
    <property type="entry name" value="RNA_pol_Rpb1_4"/>
    <property type="match status" value="1"/>
</dbReference>
<dbReference type="Pfam" id="PF04998">
    <property type="entry name" value="RNA_pol_Rpb1_5"/>
    <property type="match status" value="1"/>
</dbReference>
<dbReference type="SUPFAM" id="SSF64484">
    <property type="entry name" value="beta and beta-prime subunits of DNA dependent RNA-polymerase"/>
    <property type="match status" value="1"/>
</dbReference>
<geneLocation type="chloroplast"/>
<reference key="1">
    <citation type="journal article" date="2007" name="Mol. Genet. Genomics">
        <title>Chloroplast genomes of the diatoms Phaeodactylum tricornutum and Thalassiosira pseudonana: comparison with other plastid genomes of the red lineage.</title>
        <authorList>
            <person name="Oudot-Le Secq M.-P."/>
            <person name="Grimwood J."/>
            <person name="Shapiro H."/>
            <person name="Armbrust E.V."/>
            <person name="Bowler C."/>
            <person name="Green B.R."/>
        </authorList>
    </citation>
    <scope>NUCLEOTIDE SEQUENCE [LARGE SCALE GENOMIC DNA]</scope>
    <source>
        <strain>CCMP1335 / NEPCC58 / CCAP 1085/12</strain>
    </source>
</reference>
<protein>
    <recommendedName>
        <fullName evidence="1">DNA-directed RNA polymerase subunit beta''</fullName>
        <ecNumber evidence="1">2.7.7.6</ecNumber>
    </recommendedName>
    <alternativeName>
        <fullName evidence="1">PEP</fullName>
    </alternativeName>
    <alternativeName>
        <fullName evidence="1">Plastid-encoded RNA polymerase subunit beta''</fullName>
        <shortName evidence="1">RNA polymerase subunit beta''</shortName>
    </alternativeName>
</protein>
<name>RPOC2_THAPS</name>
<keyword id="KW-0150">Chloroplast</keyword>
<keyword id="KW-0240">DNA-directed RNA polymerase</keyword>
<keyword id="KW-0479">Metal-binding</keyword>
<keyword id="KW-0548">Nucleotidyltransferase</keyword>
<keyword id="KW-0934">Plastid</keyword>
<keyword id="KW-0804">Transcription</keyword>
<keyword id="KW-0808">Transferase</keyword>
<keyword id="KW-0862">Zinc</keyword>
<feature type="chain" id="PRO_0000277204" description="DNA-directed RNA polymerase subunit beta''">
    <location>
        <begin position="1"/>
        <end position="1446"/>
    </location>
</feature>
<feature type="binding site" evidence="1">
    <location>
        <position position="217"/>
    </location>
    <ligand>
        <name>Zn(2+)</name>
        <dbReference type="ChEBI" id="CHEBI:29105"/>
    </ligand>
</feature>
<feature type="binding site" evidence="1">
    <location>
        <position position="285"/>
    </location>
    <ligand>
        <name>Zn(2+)</name>
        <dbReference type="ChEBI" id="CHEBI:29105"/>
    </ligand>
</feature>
<feature type="binding site" evidence="1">
    <location>
        <position position="292"/>
    </location>
    <ligand>
        <name>Zn(2+)</name>
        <dbReference type="ChEBI" id="CHEBI:29105"/>
    </ligand>
</feature>
<feature type="binding site" evidence="1">
    <location>
        <position position="295"/>
    </location>
    <ligand>
        <name>Zn(2+)</name>
        <dbReference type="ChEBI" id="CHEBI:29105"/>
    </ligand>
</feature>
<proteinExistence type="inferred from homology"/>
<comment type="function">
    <text evidence="1">DNA-dependent RNA polymerase catalyzes the transcription of DNA into RNA using the four ribonucleoside triphosphates as substrates.</text>
</comment>
<comment type="catalytic activity">
    <reaction evidence="1">
        <text>RNA(n) + a ribonucleoside 5'-triphosphate = RNA(n+1) + diphosphate</text>
        <dbReference type="Rhea" id="RHEA:21248"/>
        <dbReference type="Rhea" id="RHEA-COMP:14527"/>
        <dbReference type="Rhea" id="RHEA-COMP:17342"/>
        <dbReference type="ChEBI" id="CHEBI:33019"/>
        <dbReference type="ChEBI" id="CHEBI:61557"/>
        <dbReference type="ChEBI" id="CHEBI:140395"/>
        <dbReference type="EC" id="2.7.7.6"/>
    </reaction>
</comment>
<comment type="cofactor">
    <cofactor evidence="1">
        <name>Zn(2+)</name>
        <dbReference type="ChEBI" id="CHEBI:29105"/>
    </cofactor>
    <text evidence="1">Binds 1 Zn(2+) ion per subunit.</text>
</comment>
<comment type="subunit">
    <text evidence="1">In plastids the minimal PEP RNA polymerase catalytic core is composed of four subunits: alpha, beta, beta', and beta''. When a (nuclear-encoded) sigma factor is associated with the core the holoenzyme is formed, which can initiate transcription.</text>
</comment>
<comment type="subcellular location">
    <subcellularLocation>
        <location evidence="1">Plastid</location>
        <location evidence="1">Chloroplast</location>
    </subcellularLocation>
</comment>
<comment type="similarity">
    <text evidence="1">Belongs to the RNA polymerase beta' chain family. RpoC2 subfamily.</text>
</comment>
<gene>
    <name evidence="1" type="primary">rpoC2</name>
</gene>
<evidence type="ECO:0000255" key="1">
    <source>
        <dbReference type="HAMAP-Rule" id="MF_01324"/>
    </source>
</evidence>
<sequence length="1446" mass="166689">MKDYIYQNTLINKKQLKELLAWSFSKYDSMQASLLADELKYLGFKYATQAGISISIEDLKVPATKNEMLEKANKDILNAEKICLKGKITDVERFQKIIDTWSIASESLKDNVVSYFKTYDPLNSVYIMAFSGARGNLSQVRQLVGMRGLMADPSGEIMRVPIKKNFREGLTITDYLMSGYGARKGIVDTALKTANSGYLTRRLIDIAQDIVIREKDCLTSSSFLIDSQTKFDTEQLIGRVLLKSVYDSKTEKLIAKANTQLTLDLLNLFNQKQISKFYIRSPLTCNLYHSICQMCYGWDLSNQNLVDLGEAVGILAGQSIGEPGTQLTMRTFHTGGIFTSEARQQIISPKNGIIKFSKILKTIILRTNRGEDVLLTKNSGSLILIPEKHTDEIIQIELLRNTMLFVKSNQYIKQSAIIGELISTDKQTLTERKPILSDTAGEIFIPRLKTRMNLITQNRLLWILSGQVYQAPSNSFLNFYTDHKINKNSYIFRTKLINQYSGYTKVLNQNKNLLEQKIQITNETYFLENSYVQKILKPITNKNYLLNFNNLTYLITLKDSNSKNWKRCKKYKPFATSFNNNFKTLTGGIMYYDQRIKQKFDSFNTLISYNIAYEISKEDYDKVSKDHYENYLKKLENKIDKNGFIFYQNFLNYQEMESIFLKFKLKKKIVHNSLIWLSEETYKLNCDKNILLVENGNFIAKNFEIIPNIISKTAGIITVSQKNNMIEEIAIKAGFVYQGKQFEQLDKKVYYPGEIIFDNIKITQPSLCEHINNKSNNQLLIRPFAIYEIPKEKTVKSLFSDKNNSKSIFTITNKITYLYKTNQKIKTSNHINLISQNINLKAKNSVQNNTIIDLSNSFKTKRLNLRISENLLLKHYIPAHLKYTNLQYCLLVEPTQFIDSYTTLGYLESLITNSLEIVKFKSKRANKKQVFLISNKDCITVRKEQGKNKTANELIIDNINVNQTGKVLIDNGQFLTVQKGRPYFFPNCKSDDSKEKLDLQYKLIGLNNTISNNTNTFLNYYDVTKRSLVERLGPNKKSYGFKVKFSKMFIKKNGKFYSSPIPLFLNNFSIIKEEQKRLNEGKNEINNFIIKNTQLKIKQCLPLLLKSSELVTNKIKRKTPFNNNLTGLKFLKYPFNKSIGIHSLTEDYFEQEVNNVYCKNGEFIEKGEVIGLLNFEKEITGDIVQGLPRIEELLEARKKKPTNKHLATNQKKSLLIQKTSIDSSFEFQKLGTTIKENDKINPHNLLKIYFNYYGIKKQFFSNKEMFALSYRLTDNYEASYRTFKKIQLLILNAVQSVYESQGVSIANKHLEVIIKQMTTKVLITHEGHTPLLPREVVDLYHIQYINKIIEAHNKRPAYYVPLLLGITKAALNNPSFISAASFQETTRVLTKAAIEGRVDWLRGLKENIIIGHLIPSGTGYQSYSNCFNQLAQSKTKINLEKIKIKI</sequence>